<evidence type="ECO:0000255" key="1">
    <source>
        <dbReference type="HAMAP-Rule" id="MF_00607"/>
    </source>
</evidence>
<sequence>MINVEYKHTQVAAKKKLGQNFLTDRNITRKTVLLSGAKPDDQVVEIGPGFGALTRELVEECHNLTVIEKDPTLATFIRNEYPQIKVIEGDVLTINFSAMAQAGKPLQILGNIPYSITSPILFHLLEHRRAFRSATLMMQHEVALRLAAKPATKEYGILAVQMQAFCKVEYLFKVSRKVFKPQPKVESAVIKLTPHATDPALDADGFRRFVRIAFHQRRKTLLNNLKESYNLELVDSNKLQLRAEALSIEELLELFSLIKTKSE</sequence>
<keyword id="KW-0963">Cytoplasm</keyword>
<keyword id="KW-0489">Methyltransferase</keyword>
<keyword id="KW-0694">RNA-binding</keyword>
<keyword id="KW-0698">rRNA processing</keyword>
<keyword id="KW-0949">S-adenosyl-L-methionine</keyword>
<keyword id="KW-0808">Transferase</keyword>
<proteinExistence type="inferred from homology"/>
<name>RSMA_CHLCH</name>
<accession>Q3ARC0</accession>
<comment type="function">
    <text evidence="1">Specifically dimethylates two adjacent adenosines (A1518 and A1519) in the loop of a conserved hairpin near the 3'-end of 16S rRNA in the 30S particle. May play a critical role in biogenesis of 30S subunits.</text>
</comment>
<comment type="catalytic activity">
    <reaction evidence="1">
        <text>adenosine(1518)/adenosine(1519) in 16S rRNA + 4 S-adenosyl-L-methionine = N(6)-dimethyladenosine(1518)/N(6)-dimethyladenosine(1519) in 16S rRNA + 4 S-adenosyl-L-homocysteine + 4 H(+)</text>
        <dbReference type="Rhea" id="RHEA:19609"/>
        <dbReference type="Rhea" id="RHEA-COMP:10232"/>
        <dbReference type="Rhea" id="RHEA-COMP:10233"/>
        <dbReference type="ChEBI" id="CHEBI:15378"/>
        <dbReference type="ChEBI" id="CHEBI:57856"/>
        <dbReference type="ChEBI" id="CHEBI:59789"/>
        <dbReference type="ChEBI" id="CHEBI:74411"/>
        <dbReference type="ChEBI" id="CHEBI:74493"/>
        <dbReference type="EC" id="2.1.1.182"/>
    </reaction>
</comment>
<comment type="subcellular location">
    <subcellularLocation>
        <location evidence="1">Cytoplasm</location>
    </subcellularLocation>
</comment>
<comment type="similarity">
    <text evidence="1">Belongs to the class I-like SAM-binding methyltransferase superfamily. rRNA adenine N(6)-methyltransferase family. RsmA subfamily.</text>
</comment>
<dbReference type="EC" id="2.1.1.182" evidence="1"/>
<dbReference type="EMBL" id="CP000108">
    <property type="protein sequence ID" value="ABB28455.1"/>
    <property type="molecule type" value="Genomic_DNA"/>
</dbReference>
<dbReference type="SMR" id="Q3ARC0"/>
<dbReference type="STRING" id="340177.Cag_1193"/>
<dbReference type="KEGG" id="cch:Cag_1193"/>
<dbReference type="eggNOG" id="COG0030">
    <property type="taxonomic scope" value="Bacteria"/>
</dbReference>
<dbReference type="HOGENOM" id="CLU_041220_0_1_10"/>
<dbReference type="OrthoDB" id="9814755at2"/>
<dbReference type="GO" id="GO:0005829">
    <property type="term" value="C:cytosol"/>
    <property type="evidence" value="ECO:0007669"/>
    <property type="project" value="TreeGrafter"/>
</dbReference>
<dbReference type="GO" id="GO:0052908">
    <property type="term" value="F:16S rRNA (adenine(1518)-N(6)/adenine(1519)-N(6))-dimethyltransferase activity"/>
    <property type="evidence" value="ECO:0007669"/>
    <property type="project" value="UniProtKB-EC"/>
</dbReference>
<dbReference type="GO" id="GO:0003723">
    <property type="term" value="F:RNA binding"/>
    <property type="evidence" value="ECO:0007669"/>
    <property type="project" value="UniProtKB-KW"/>
</dbReference>
<dbReference type="FunFam" id="3.40.50.150:FF:000023">
    <property type="entry name" value="Ribosomal RNA small subunit methyltransferase A"/>
    <property type="match status" value="1"/>
</dbReference>
<dbReference type="Gene3D" id="1.10.8.100">
    <property type="entry name" value="Ribosomal RNA adenine dimethylase-like, domain 2"/>
    <property type="match status" value="1"/>
</dbReference>
<dbReference type="Gene3D" id="3.40.50.150">
    <property type="entry name" value="Vaccinia Virus protein VP39"/>
    <property type="match status" value="1"/>
</dbReference>
<dbReference type="HAMAP" id="MF_00607">
    <property type="entry name" value="16SrRNA_methyltr_A"/>
    <property type="match status" value="1"/>
</dbReference>
<dbReference type="InterPro" id="IPR001737">
    <property type="entry name" value="KsgA/Erm"/>
</dbReference>
<dbReference type="InterPro" id="IPR023165">
    <property type="entry name" value="rRNA_Ade_diMease-like_C"/>
</dbReference>
<dbReference type="InterPro" id="IPR020596">
    <property type="entry name" value="rRNA_Ade_Mease_Trfase_CS"/>
</dbReference>
<dbReference type="InterPro" id="IPR020598">
    <property type="entry name" value="rRNA_Ade_methylase_Trfase_N"/>
</dbReference>
<dbReference type="InterPro" id="IPR011530">
    <property type="entry name" value="rRNA_adenine_dimethylase"/>
</dbReference>
<dbReference type="InterPro" id="IPR029063">
    <property type="entry name" value="SAM-dependent_MTases_sf"/>
</dbReference>
<dbReference type="NCBIfam" id="TIGR00755">
    <property type="entry name" value="ksgA"/>
    <property type="match status" value="1"/>
</dbReference>
<dbReference type="PANTHER" id="PTHR11727">
    <property type="entry name" value="DIMETHYLADENOSINE TRANSFERASE"/>
    <property type="match status" value="1"/>
</dbReference>
<dbReference type="PANTHER" id="PTHR11727:SF7">
    <property type="entry name" value="DIMETHYLADENOSINE TRANSFERASE-RELATED"/>
    <property type="match status" value="1"/>
</dbReference>
<dbReference type="Pfam" id="PF00398">
    <property type="entry name" value="RrnaAD"/>
    <property type="match status" value="1"/>
</dbReference>
<dbReference type="SMART" id="SM00650">
    <property type="entry name" value="rADc"/>
    <property type="match status" value="1"/>
</dbReference>
<dbReference type="SUPFAM" id="SSF53335">
    <property type="entry name" value="S-adenosyl-L-methionine-dependent methyltransferases"/>
    <property type="match status" value="1"/>
</dbReference>
<dbReference type="PROSITE" id="PS01131">
    <property type="entry name" value="RRNA_A_DIMETH"/>
    <property type="match status" value="1"/>
</dbReference>
<dbReference type="PROSITE" id="PS51689">
    <property type="entry name" value="SAM_RNA_A_N6_MT"/>
    <property type="match status" value="1"/>
</dbReference>
<gene>
    <name evidence="1" type="primary">rsmA</name>
    <name evidence="1" type="synonym">ksgA</name>
    <name type="ordered locus">Cag_1193</name>
</gene>
<protein>
    <recommendedName>
        <fullName evidence="1">Ribosomal RNA small subunit methyltransferase A</fullName>
        <ecNumber evidence="1">2.1.1.182</ecNumber>
    </recommendedName>
    <alternativeName>
        <fullName evidence="1">16S rRNA (adenine(1518)-N(6)/adenine(1519)-N(6))-dimethyltransferase</fullName>
    </alternativeName>
    <alternativeName>
        <fullName evidence="1">16S rRNA dimethyladenosine transferase</fullName>
    </alternativeName>
    <alternativeName>
        <fullName evidence="1">16S rRNA dimethylase</fullName>
    </alternativeName>
    <alternativeName>
        <fullName evidence="1">S-adenosylmethionine-6-N', N'-adenosyl(rRNA) dimethyltransferase</fullName>
    </alternativeName>
</protein>
<feature type="chain" id="PRO_0000257270" description="Ribosomal RNA small subunit methyltransferase A">
    <location>
        <begin position="1"/>
        <end position="263"/>
    </location>
</feature>
<feature type="binding site" evidence="1">
    <location>
        <position position="20"/>
    </location>
    <ligand>
        <name>S-adenosyl-L-methionine</name>
        <dbReference type="ChEBI" id="CHEBI:59789"/>
    </ligand>
</feature>
<feature type="binding site" evidence="1">
    <location>
        <position position="22"/>
    </location>
    <ligand>
        <name>S-adenosyl-L-methionine</name>
        <dbReference type="ChEBI" id="CHEBI:59789"/>
    </ligand>
</feature>
<feature type="binding site" evidence="1">
    <location>
        <position position="47"/>
    </location>
    <ligand>
        <name>S-adenosyl-L-methionine</name>
        <dbReference type="ChEBI" id="CHEBI:59789"/>
    </ligand>
</feature>
<feature type="binding site" evidence="1">
    <location>
        <position position="68"/>
    </location>
    <ligand>
        <name>S-adenosyl-L-methionine</name>
        <dbReference type="ChEBI" id="CHEBI:59789"/>
    </ligand>
</feature>
<feature type="binding site" evidence="1">
    <location>
        <position position="90"/>
    </location>
    <ligand>
        <name>S-adenosyl-L-methionine</name>
        <dbReference type="ChEBI" id="CHEBI:59789"/>
    </ligand>
</feature>
<feature type="binding site" evidence="1">
    <location>
        <position position="111"/>
    </location>
    <ligand>
        <name>S-adenosyl-L-methionine</name>
        <dbReference type="ChEBI" id="CHEBI:59789"/>
    </ligand>
</feature>
<reference key="1">
    <citation type="submission" date="2005-08" db="EMBL/GenBank/DDBJ databases">
        <title>Complete sequence of Chlorobium chlorochromatii CaD3.</title>
        <authorList>
            <consortium name="US DOE Joint Genome Institute"/>
            <person name="Copeland A."/>
            <person name="Lucas S."/>
            <person name="Lapidus A."/>
            <person name="Barry K."/>
            <person name="Detter J.C."/>
            <person name="Glavina T."/>
            <person name="Hammon N."/>
            <person name="Israni S."/>
            <person name="Pitluck S."/>
            <person name="Bryant D."/>
            <person name="Schmutz J."/>
            <person name="Larimer F."/>
            <person name="Land M."/>
            <person name="Kyrpides N."/>
            <person name="Ivanova N."/>
            <person name="Richardson P."/>
        </authorList>
    </citation>
    <scope>NUCLEOTIDE SEQUENCE [LARGE SCALE GENOMIC DNA]</scope>
    <source>
        <strain>CaD3</strain>
    </source>
</reference>
<organism>
    <name type="scientific">Chlorobium chlorochromatii (strain CaD3)</name>
    <dbReference type="NCBI Taxonomy" id="340177"/>
    <lineage>
        <taxon>Bacteria</taxon>
        <taxon>Pseudomonadati</taxon>
        <taxon>Chlorobiota</taxon>
        <taxon>Chlorobiia</taxon>
        <taxon>Chlorobiales</taxon>
        <taxon>Chlorobiaceae</taxon>
        <taxon>Chlorobium/Pelodictyon group</taxon>
        <taxon>Chlorobium</taxon>
    </lineage>
</organism>